<keyword id="KW-0687">Ribonucleoprotein</keyword>
<keyword id="KW-0689">Ribosomal protein</keyword>
<keyword id="KW-0694">RNA-binding</keyword>
<keyword id="KW-0699">rRNA-binding</keyword>
<sequence>MSRVAKNPVKLPAGVEIKLAGQQLSIKGAKGALELKVHPSVEVIQDSGELRFAARNGDQQTRAMAGTTRALVNNMVVGVSQGFERKLQLVGVGYKAQAKGQVLSLSLGFSHPVDYELPAGIVAETPSQTDILIKGIDKQLVGQVAAEIRDFRPPEPYKGKGVRYADEVVRRKEAKKK</sequence>
<comment type="function">
    <text evidence="1">This protein binds to the 23S rRNA, and is important in its secondary structure. It is located near the subunit interface in the base of the L7/L12 stalk, and near the tRNA binding site of the peptidyltransferase center.</text>
</comment>
<comment type="subunit">
    <text evidence="1">Part of the 50S ribosomal subunit.</text>
</comment>
<comment type="similarity">
    <text evidence="1">Belongs to the universal ribosomal protein uL6 family.</text>
</comment>
<reference key="1">
    <citation type="journal article" date="2009" name="Genome Res.">
        <title>Newly introduced genomic prophage islands are critical determinants of in vivo competitiveness in the Liverpool epidemic strain of Pseudomonas aeruginosa.</title>
        <authorList>
            <person name="Winstanley C."/>
            <person name="Langille M.G.I."/>
            <person name="Fothergill J.L."/>
            <person name="Kukavica-Ibrulj I."/>
            <person name="Paradis-Bleau C."/>
            <person name="Sanschagrin F."/>
            <person name="Thomson N.R."/>
            <person name="Winsor G.L."/>
            <person name="Quail M.A."/>
            <person name="Lennard N."/>
            <person name="Bignell A."/>
            <person name="Clarke L."/>
            <person name="Seeger K."/>
            <person name="Saunders D."/>
            <person name="Harris D."/>
            <person name="Parkhill J."/>
            <person name="Hancock R.E.W."/>
            <person name="Brinkman F.S.L."/>
            <person name="Levesque R.C."/>
        </authorList>
    </citation>
    <scope>NUCLEOTIDE SEQUENCE [LARGE SCALE GENOMIC DNA]</scope>
    <source>
        <strain>LESB58</strain>
    </source>
</reference>
<evidence type="ECO:0000255" key="1">
    <source>
        <dbReference type="HAMAP-Rule" id="MF_01365"/>
    </source>
</evidence>
<evidence type="ECO:0000305" key="2"/>
<organism>
    <name type="scientific">Pseudomonas aeruginosa (strain LESB58)</name>
    <dbReference type="NCBI Taxonomy" id="557722"/>
    <lineage>
        <taxon>Bacteria</taxon>
        <taxon>Pseudomonadati</taxon>
        <taxon>Pseudomonadota</taxon>
        <taxon>Gammaproteobacteria</taxon>
        <taxon>Pseudomonadales</taxon>
        <taxon>Pseudomonadaceae</taxon>
        <taxon>Pseudomonas</taxon>
    </lineage>
</organism>
<name>RL6_PSEA8</name>
<proteinExistence type="inferred from homology"/>
<feature type="chain" id="PRO_1000144032" description="Large ribosomal subunit protein uL6">
    <location>
        <begin position="1"/>
        <end position="177"/>
    </location>
</feature>
<dbReference type="EMBL" id="FM209186">
    <property type="protein sequence ID" value="CAW25407.1"/>
    <property type="molecule type" value="Genomic_DNA"/>
</dbReference>
<dbReference type="RefSeq" id="WP_003093699.1">
    <property type="nucleotide sequence ID" value="NC_011770.1"/>
</dbReference>
<dbReference type="SMR" id="B7V659"/>
<dbReference type="GeneID" id="77219213"/>
<dbReference type="KEGG" id="pag:PLES_06801"/>
<dbReference type="HOGENOM" id="CLU_065464_1_2_6"/>
<dbReference type="GO" id="GO:0022625">
    <property type="term" value="C:cytosolic large ribosomal subunit"/>
    <property type="evidence" value="ECO:0007669"/>
    <property type="project" value="TreeGrafter"/>
</dbReference>
<dbReference type="GO" id="GO:0019843">
    <property type="term" value="F:rRNA binding"/>
    <property type="evidence" value="ECO:0007669"/>
    <property type="project" value="UniProtKB-UniRule"/>
</dbReference>
<dbReference type="GO" id="GO:0003735">
    <property type="term" value="F:structural constituent of ribosome"/>
    <property type="evidence" value="ECO:0007669"/>
    <property type="project" value="InterPro"/>
</dbReference>
<dbReference type="GO" id="GO:0002181">
    <property type="term" value="P:cytoplasmic translation"/>
    <property type="evidence" value="ECO:0007669"/>
    <property type="project" value="TreeGrafter"/>
</dbReference>
<dbReference type="FunFam" id="3.90.930.12:FF:000001">
    <property type="entry name" value="50S ribosomal protein L6"/>
    <property type="match status" value="1"/>
</dbReference>
<dbReference type="FunFam" id="3.90.930.12:FF:000002">
    <property type="entry name" value="50S ribosomal protein L6"/>
    <property type="match status" value="1"/>
</dbReference>
<dbReference type="Gene3D" id="3.90.930.12">
    <property type="entry name" value="Ribosomal protein L6, alpha-beta domain"/>
    <property type="match status" value="2"/>
</dbReference>
<dbReference type="HAMAP" id="MF_01365_B">
    <property type="entry name" value="Ribosomal_uL6_B"/>
    <property type="match status" value="1"/>
</dbReference>
<dbReference type="InterPro" id="IPR000702">
    <property type="entry name" value="Ribosomal_uL6-like"/>
</dbReference>
<dbReference type="InterPro" id="IPR036789">
    <property type="entry name" value="Ribosomal_uL6-like_a/b-dom_sf"/>
</dbReference>
<dbReference type="InterPro" id="IPR020040">
    <property type="entry name" value="Ribosomal_uL6_a/b-dom"/>
</dbReference>
<dbReference type="InterPro" id="IPR019906">
    <property type="entry name" value="Ribosomal_uL6_bac-type"/>
</dbReference>
<dbReference type="InterPro" id="IPR002358">
    <property type="entry name" value="Ribosomal_uL6_CS"/>
</dbReference>
<dbReference type="NCBIfam" id="TIGR03654">
    <property type="entry name" value="L6_bact"/>
    <property type="match status" value="1"/>
</dbReference>
<dbReference type="PANTHER" id="PTHR11655">
    <property type="entry name" value="60S/50S RIBOSOMAL PROTEIN L6/L9"/>
    <property type="match status" value="1"/>
</dbReference>
<dbReference type="PANTHER" id="PTHR11655:SF14">
    <property type="entry name" value="LARGE RIBOSOMAL SUBUNIT PROTEIN UL6M"/>
    <property type="match status" value="1"/>
</dbReference>
<dbReference type="Pfam" id="PF00347">
    <property type="entry name" value="Ribosomal_L6"/>
    <property type="match status" value="2"/>
</dbReference>
<dbReference type="PIRSF" id="PIRSF002162">
    <property type="entry name" value="Ribosomal_L6"/>
    <property type="match status" value="1"/>
</dbReference>
<dbReference type="PRINTS" id="PR00059">
    <property type="entry name" value="RIBOSOMALL6"/>
</dbReference>
<dbReference type="SUPFAM" id="SSF56053">
    <property type="entry name" value="Ribosomal protein L6"/>
    <property type="match status" value="2"/>
</dbReference>
<dbReference type="PROSITE" id="PS00525">
    <property type="entry name" value="RIBOSOMAL_L6_1"/>
    <property type="match status" value="1"/>
</dbReference>
<protein>
    <recommendedName>
        <fullName evidence="1">Large ribosomal subunit protein uL6</fullName>
    </recommendedName>
    <alternativeName>
        <fullName evidence="2">50S ribosomal protein L6</fullName>
    </alternativeName>
</protein>
<accession>B7V659</accession>
<gene>
    <name evidence="1" type="primary">rplF</name>
    <name type="ordered locus">PLES_06801</name>
</gene>